<protein>
    <recommendedName>
        <fullName evidence="1">Photosystem II reaction center protein Z</fullName>
        <shortName evidence="1">PSII-Z</shortName>
    </recommendedName>
</protein>
<gene>
    <name evidence="1" type="primary">psbZ</name>
    <name type="synonym">lhbA</name>
</gene>
<evidence type="ECO:0000255" key="1">
    <source>
        <dbReference type="HAMAP-Rule" id="MF_00644"/>
    </source>
</evidence>
<name>PSBZ_AMBTC</name>
<comment type="function">
    <text evidence="1">May control the interaction of photosystem II (PSII) cores with the light-harvesting antenna, regulates electron flow through the 2 photosystem reaction centers. PSII is a light-driven water plastoquinone oxidoreductase, using light energy to abstract electrons from H(2)O, generating a proton gradient subsequently used for ATP formation.</text>
</comment>
<comment type="subunit">
    <text evidence="1">PSII is composed of 1 copy each of membrane proteins PsbA, PsbB, PsbC, PsbD, PsbE, PsbF, PsbH, PsbI, PsbJ, PsbK, PsbL, PsbM, PsbT, PsbY, PsbZ, Psb30/Ycf12, at least 3 peripheral proteins of the oxygen-evolving complex and a large number of cofactors. It forms dimeric complexes.</text>
</comment>
<comment type="subcellular location">
    <subcellularLocation>
        <location evidence="1">Plastid</location>
        <location evidence="1">Chloroplast thylakoid membrane</location>
        <topology evidence="1">Multi-pass membrane protein</topology>
    </subcellularLocation>
</comment>
<comment type="similarity">
    <text evidence="1">Belongs to the PsbZ family.</text>
</comment>
<geneLocation type="chloroplast"/>
<organism>
    <name type="scientific">Amborella trichopoda</name>
    <dbReference type="NCBI Taxonomy" id="13333"/>
    <lineage>
        <taxon>Eukaryota</taxon>
        <taxon>Viridiplantae</taxon>
        <taxon>Streptophyta</taxon>
        <taxon>Embryophyta</taxon>
        <taxon>Tracheophyta</taxon>
        <taxon>Spermatophyta</taxon>
        <taxon>Magnoliopsida</taxon>
        <taxon>Amborellales</taxon>
        <taxon>Amborellaceae</taxon>
        <taxon>Amborella</taxon>
    </lineage>
</organism>
<accession>Q70Y06</accession>
<dbReference type="EMBL" id="AJ506156">
    <property type="protein sequence ID" value="CAD45104.1"/>
    <property type="molecule type" value="Genomic_DNA"/>
</dbReference>
<dbReference type="RefSeq" id="NP_904096.1">
    <property type="nucleotide sequence ID" value="NC_005086.1"/>
</dbReference>
<dbReference type="SMR" id="Q70Y06"/>
<dbReference type="STRING" id="13333.Q70Y06"/>
<dbReference type="GeneID" id="2546491"/>
<dbReference type="KEGG" id="atr:2546491"/>
<dbReference type="OrthoDB" id="769790at2759"/>
<dbReference type="Proteomes" id="UP000017836">
    <property type="component" value="Chloroplast"/>
</dbReference>
<dbReference type="GO" id="GO:0009535">
    <property type="term" value="C:chloroplast thylakoid membrane"/>
    <property type="evidence" value="ECO:0007669"/>
    <property type="project" value="UniProtKB-SubCell"/>
</dbReference>
<dbReference type="GO" id="GO:0009539">
    <property type="term" value="C:photosystem II reaction center"/>
    <property type="evidence" value="ECO:0007669"/>
    <property type="project" value="InterPro"/>
</dbReference>
<dbReference type="GO" id="GO:0015979">
    <property type="term" value="P:photosynthesis"/>
    <property type="evidence" value="ECO:0007669"/>
    <property type="project" value="UniProtKB-UniRule"/>
</dbReference>
<dbReference type="GO" id="GO:0042549">
    <property type="term" value="P:photosystem II stabilization"/>
    <property type="evidence" value="ECO:0007669"/>
    <property type="project" value="InterPro"/>
</dbReference>
<dbReference type="FunFam" id="1.10.287.740:FF:000001">
    <property type="entry name" value="Photosystem II reaction center protein Z"/>
    <property type="match status" value="1"/>
</dbReference>
<dbReference type="Gene3D" id="1.10.287.740">
    <property type="entry name" value="Photosystem II PsbZ, reaction centre"/>
    <property type="match status" value="1"/>
</dbReference>
<dbReference type="HAMAP" id="MF_00644">
    <property type="entry name" value="PSII_PsbZ"/>
    <property type="match status" value="1"/>
</dbReference>
<dbReference type="InterPro" id="IPR002644">
    <property type="entry name" value="PSII_PsbZ"/>
</dbReference>
<dbReference type="InterPro" id="IPR036512">
    <property type="entry name" value="PSII_PsbZ_sf"/>
</dbReference>
<dbReference type="NCBIfam" id="TIGR03043">
    <property type="entry name" value="PS_II_psbZ"/>
    <property type="match status" value="1"/>
</dbReference>
<dbReference type="PANTHER" id="PTHR34971">
    <property type="entry name" value="PHOTOSYSTEM II REACTION CENTER PROTEIN Z"/>
    <property type="match status" value="1"/>
</dbReference>
<dbReference type="PANTHER" id="PTHR34971:SF2">
    <property type="entry name" value="PHOTOSYSTEM II REACTION CENTER PROTEIN Z"/>
    <property type="match status" value="1"/>
</dbReference>
<dbReference type="Pfam" id="PF01737">
    <property type="entry name" value="Ycf9"/>
    <property type="match status" value="1"/>
</dbReference>
<dbReference type="SUPFAM" id="SSF161055">
    <property type="entry name" value="PsbZ-like"/>
    <property type="match status" value="1"/>
</dbReference>
<proteinExistence type="inferred from homology"/>
<reference key="1">
    <citation type="journal article" date="2003" name="Mol. Biol. Evol.">
        <title>Analysis of the Amborella trichopoda chloroplast genome sequence suggests that Amborella is not a basal angiosperm.</title>
        <authorList>
            <person name="Goremykin V.V."/>
            <person name="Hirsch-Ernst K.I."/>
            <person name="Wolfl S."/>
            <person name="Hellwig F.H."/>
        </authorList>
    </citation>
    <scope>NUCLEOTIDE SEQUENCE [LARGE SCALE GENOMIC DNA]</scope>
</reference>
<sequence length="62" mass="6545">MTIAFQLAVFALIATSSILLISVPVVFASSDGWSSNKNIVFSGTSLWIGLVFLVAILNSLIS</sequence>
<feature type="chain" id="PRO_0000217687" description="Photosystem II reaction center protein Z">
    <location>
        <begin position="1"/>
        <end position="62"/>
    </location>
</feature>
<feature type="transmembrane region" description="Helical" evidence="1">
    <location>
        <begin position="8"/>
        <end position="28"/>
    </location>
</feature>
<feature type="transmembrane region" description="Helical" evidence="1">
    <location>
        <begin position="41"/>
        <end position="61"/>
    </location>
</feature>
<keyword id="KW-0150">Chloroplast</keyword>
<keyword id="KW-0472">Membrane</keyword>
<keyword id="KW-0602">Photosynthesis</keyword>
<keyword id="KW-0604">Photosystem II</keyword>
<keyword id="KW-0934">Plastid</keyword>
<keyword id="KW-0674">Reaction center</keyword>
<keyword id="KW-1185">Reference proteome</keyword>
<keyword id="KW-0793">Thylakoid</keyword>
<keyword id="KW-0812">Transmembrane</keyword>
<keyword id="KW-1133">Transmembrane helix</keyword>